<accession>A1U547</accession>
<keyword id="KW-0067">ATP-binding</keyword>
<keyword id="KW-0963">Cytoplasm</keyword>
<keyword id="KW-0460">Magnesium</keyword>
<keyword id="KW-0479">Metal-binding</keyword>
<keyword id="KW-0547">Nucleotide-binding</keyword>
<keyword id="KW-0554">One-carbon metabolism</keyword>
<keyword id="KW-0630">Potassium</keyword>
<keyword id="KW-0808">Transferase</keyword>
<protein>
    <recommendedName>
        <fullName evidence="1">S-adenosylmethionine synthase</fullName>
        <shortName evidence="1">AdoMet synthase</shortName>
        <ecNumber evidence="1">2.5.1.6</ecNumber>
    </recommendedName>
    <alternativeName>
        <fullName evidence="1">MAT</fullName>
    </alternativeName>
    <alternativeName>
        <fullName evidence="1">Methionine adenosyltransferase</fullName>
    </alternativeName>
</protein>
<reference key="1">
    <citation type="journal article" date="2011" name="Appl. Environ. Microbiol.">
        <title>Genomic potential of Marinobacter aquaeolei, a biogeochemical 'opportunitroph'.</title>
        <authorList>
            <person name="Singer E."/>
            <person name="Webb E.A."/>
            <person name="Nelson W.C."/>
            <person name="Heidelberg J.F."/>
            <person name="Ivanova N."/>
            <person name="Pati A."/>
            <person name="Edwards K.J."/>
        </authorList>
    </citation>
    <scope>NUCLEOTIDE SEQUENCE [LARGE SCALE GENOMIC DNA]</scope>
    <source>
        <strain>ATCC 700491 / DSM 11845 / VT8</strain>
    </source>
</reference>
<evidence type="ECO:0000255" key="1">
    <source>
        <dbReference type="HAMAP-Rule" id="MF_00086"/>
    </source>
</evidence>
<name>METK_MARN8</name>
<organism>
    <name type="scientific">Marinobacter nauticus (strain ATCC 700491 / DSM 11845 / VT8)</name>
    <name type="common">Marinobacter aquaeolei</name>
    <dbReference type="NCBI Taxonomy" id="351348"/>
    <lineage>
        <taxon>Bacteria</taxon>
        <taxon>Pseudomonadati</taxon>
        <taxon>Pseudomonadota</taxon>
        <taxon>Gammaproteobacteria</taxon>
        <taxon>Pseudomonadales</taxon>
        <taxon>Marinobacteraceae</taxon>
        <taxon>Marinobacter</taxon>
    </lineage>
</organism>
<gene>
    <name evidence="1" type="primary">metK</name>
    <name type="ordered locus">Maqu_3042</name>
</gene>
<sequence length="396" mass="42588">MSDYNIFTSESVSEGHPDKLADQISDAVLDAILTDDPHARVACETMVKTGVAIVGGEITTSAWVDLEDLVRGVIKDIDYTSSEVGYDGDTCGVINIIGKQSVDIAQGVDRQKPEDQGAGDQGLMFGYASNETDVLMPAPITFSHRLVQRQAEARKSGLLPWLRPDAKSQVTCRYENGKVVGIDAVVLSTQHDPDVTQADLKEAVMELIVKHTLPAELLHKDTQFHINPTGKFVIGGPVGDCGLTGRKIIVDTYGGMARHGGGAFSGKDPSKVDRSAAYAGRYVAKNIVAAGLAEKCEIQVSYAIGVAQPTSISLNTFGTGKISDDKIIDLVRAHFDLRPYAITNMLDLLHPMYRATAAYGHFGRDPYEMTVGGKTFTAFPWEKTDRAAALKDAAGI</sequence>
<feature type="chain" id="PRO_0000302936" description="S-adenosylmethionine synthase">
    <location>
        <begin position="1"/>
        <end position="396"/>
    </location>
</feature>
<feature type="region of interest" description="Flexible loop" evidence="1">
    <location>
        <begin position="100"/>
        <end position="110"/>
    </location>
</feature>
<feature type="binding site" description="in other chain" evidence="1">
    <location>
        <position position="16"/>
    </location>
    <ligand>
        <name>ATP</name>
        <dbReference type="ChEBI" id="CHEBI:30616"/>
        <note>ligand shared between two neighboring subunits</note>
    </ligand>
</feature>
<feature type="binding site" evidence="1">
    <location>
        <position position="18"/>
    </location>
    <ligand>
        <name>Mg(2+)</name>
        <dbReference type="ChEBI" id="CHEBI:18420"/>
    </ligand>
</feature>
<feature type="binding site" evidence="1">
    <location>
        <position position="44"/>
    </location>
    <ligand>
        <name>K(+)</name>
        <dbReference type="ChEBI" id="CHEBI:29103"/>
    </ligand>
</feature>
<feature type="binding site" description="in other chain" evidence="1">
    <location>
        <position position="57"/>
    </location>
    <ligand>
        <name>L-methionine</name>
        <dbReference type="ChEBI" id="CHEBI:57844"/>
        <note>ligand shared between two neighboring subunits</note>
    </ligand>
</feature>
<feature type="binding site" description="in other chain" evidence="1">
    <location>
        <position position="100"/>
    </location>
    <ligand>
        <name>L-methionine</name>
        <dbReference type="ChEBI" id="CHEBI:57844"/>
        <note>ligand shared between two neighboring subunits</note>
    </ligand>
</feature>
<feature type="binding site" description="in other chain" evidence="1">
    <location>
        <begin position="165"/>
        <end position="167"/>
    </location>
    <ligand>
        <name>ATP</name>
        <dbReference type="ChEBI" id="CHEBI:30616"/>
        <note>ligand shared between two neighboring subunits</note>
    </ligand>
</feature>
<feature type="binding site" description="in other chain" evidence="1">
    <location>
        <begin position="231"/>
        <end position="232"/>
    </location>
    <ligand>
        <name>ATP</name>
        <dbReference type="ChEBI" id="CHEBI:30616"/>
        <note>ligand shared between two neighboring subunits</note>
    </ligand>
</feature>
<feature type="binding site" evidence="1">
    <location>
        <position position="240"/>
    </location>
    <ligand>
        <name>ATP</name>
        <dbReference type="ChEBI" id="CHEBI:30616"/>
        <note>ligand shared between two neighboring subunits</note>
    </ligand>
</feature>
<feature type="binding site" evidence="1">
    <location>
        <position position="240"/>
    </location>
    <ligand>
        <name>L-methionine</name>
        <dbReference type="ChEBI" id="CHEBI:57844"/>
        <note>ligand shared between two neighboring subunits</note>
    </ligand>
</feature>
<feature type="binding site" description="in other chain" evidence="1">
    <location>
        <begin position="246"/>
        <end position="247"/>
    </location>
    <ligand>
        <name>ATP</name>
        <dbReference type="ChEBI" id="CHEBI:30616"/>
        <note>ligand shared between two neighboring subunits</note>
    </ligand>
</feature>
<feature type="binding site" evidence="1">
    <location>
        <position position="263"/>
    </location>
    <ligand>
        <name>ATP</name>
        <dbReference type="ChEBI" id="CHEBI:30616"/>
        <note>ligand shared between two neighboring subunits</note>
    </ligand>
</feature>
<feature type="binding site" evidence="1">
    <location>
        <position position="267"/>
    </location>
    <ligand>
        <name>ATP</name>
        <dbReference type="ChEBI" id="CHEBI:30616"/>
        <note>ligand shared between two neighboring subunits</note>
    </ligand>
</feature>
<feature type="binding site" description="in other chain" evidence="1">
    <location>
        <position position="271"/>
    </location>
    <ligand>
        <name>L-methionine</name>
        <dbReference type="ChEBI" id="CHEBI:57844"/>
        <note>ligand shared between two neighboring subunits</note>
    </ligand>
</feature>
<comment type="function">
    <text evidence="1">Catalyzes the formation of S-adenosylmethionine (AdoMet) from methionine and ATP. The overall synthetic reaction is composed of two sequential steps, AdoMet formation and the subsequent tripolyphosphate hydrolysis which occurs prior to release of AdoMet from the enzyme.</text>
</comment>
<comment type="catalytic activity">
    <reaction evidence="1">
        <text>L-methionine + ATP + H2O = S-adenosyl-L-methionine + phosphate + diphosphate</text>
        <dbReference type="Rhea" id="RHEA:21080"/>
        <dbReference type="ChEBI" id="CHEBI:15377"/>
        <dbReference type="ChEBI" id="CHEBI:30616"/>
        <dbReference type="ChEBI" id="CHEBI:33019"/>
        <dbReference type="ChEBI" id="CHEBI:43474"/>
        <dbReference type="ChEBI" id="CHEBI:57844"/>
        <dbReference type="ChEBI" id="CHEBI:59789"/>
        <dbReference type="EC" id="2.5.1.6"/>
    </reaction>
</comment>
<comment type="cofactor">
    <cofactor evidence="1">
        <name>Mg(2+)</name>
        <dbReference type="ChEBI" id="CHEBI:18420"/>
    </cofactor>
    <text evidence="1">Binds 2 divalent ions per subunit.</text>
</comment>
<comment type="cofactor">
    <cofactor evidence="1">
        <name>K(+)</name>
        <dbReference type="ChEBI" id="CHEBI:29103"/>
    </cofactor>
    <text evidence="1">Binds 1 potassium ion per subunit.</text>
</comment>
<comment type="pathway">
    <text evidence="1">Amino-acid biosynthesis; S-adenosyl-L-methionine biosynthesis; S-adenosyl-L-methionine from L-methionine: step 1/1.</text>
</comment>
<comment type="subunit">
    <text evidence="1">Homotetramer; dimer of dimers.</text>
</comment>
<comment type="subcellular location">
    <subcellularLocation>
        <location evidence="1">Cytoplasm</location>
    </subcellularLocation>
</comment>
<comment type="similarity">
    <text evidence="1">Belongs to the AdoMet synthase family.</text>
</comment>
<dbReference type="EC" id="2.5.1.6" evidence="1"/>
<dbReference type="EMBL" id="CP000514">
    <property type="protein sequence ID" value="ABM20116.1"/>
    <property type="molecule type" value="Genomic_DNA"/>
</dbReference>
<dbReference type="RefSeq" id="WP_011786484.1">
    <property type="nucleotide sequence ID" value="NC_008740.1"/>
</dbReference>
<dbReference type="SMR" id="A1U547"/>
<dbReference type="STRING" id="351348.Maqu_3042"/>
<dbReference type="KEGG" id="maq:Maqu_3042"/>
<dbReference type="eggNOG" id="COG0192">
    <property type="taxonomic scope" value="Bacteria"/>
</dbReference>
<dbReference type="HOGENOM" id="CLU_041802_1_1_6"/>
<dbReference type="OrthoDB" id="9801686at2"/>
<dbReference type="UniPathway" id="UPA00315">
    <property type="reaction ID" value="UER00080"/>
</dbReference>
<dbReference type="Proteomes" id="UP000000998">
    <property type="component" value="Chromosome"/>
</dbReference>
<dbReference type="GO" id="GO:0005737">
    <property type="term" value="C:cytoplasm"/>
    <property type="evidence" value="ECO:0007669"/>
    <property type="project" value="UniProtKB-SubCell"/>
</dbReference>
<dbReference type="GO" id="GO:0005524">
    <property type="term" value="F:ATP binding"/>
    <property type="evidence" value="ECO:0007669"/>
    <property type="project" value="UniProtKB-UniRule"/>
</dbReference>
<dbReference type="GO" id="GO:0000287">
    <property type="term" value="F:magnesium ion binding"/>
    <property type="evidence" value="ECO:0007669"/>
    <property type="project" value="UniProtKB-UniRule"/>
</dbReference>
<dbReference type="GO" id="GO:0004478">
    <property type="term" value="F:methionine adenosyltransferase activity"/>
    <property type="evidence" value="ECO:0007669"/>
    <property type="project" value="UniProtKB-UniRule"/>
</dbReference>
<dbReference type="GO" id="GO:0006730">
    <property type="term" value="P:one-carbon metabolic process"/>
    <property type="evidence" value="ECO:0007669"/>
    <property type="project" value="UniProtKB-KW"/>
</dbReference>
<dbReference type="GO" id="GO:0006556">
    <property type="term" value="P:S-adenosylmethionine biosynthetic process"/>
    <property type="evidence" value="ECO:0007669"/>
    <property type="project" value="UniProtKB-UniRule"/>
</dbReference>
<dbReference type="CDD" id="cd18079">
    <property type="entry name" value="S-AdoMet_synt"/>
    <property type="match status" value="1"/>
</dbReference>
<dbReference type="FunFam" id="3.30.300.10:FF:000003">
    <property type="entry name" value="S-adenosylmethionine synthase"/>
    <property type="match status" value="1"/>
</dbReference>
<dbReference type="Gene3D" id="3.30.300.10">
    <property type="match status" value="3"/>
</dbReference>
<dbReference type="HAMAP" id="MF_00086">
    <property type="entry name" value="S_AdoMet_synth1"/>
    <property type="match status" value="1"/>
</dbReference>
<dbReference type="InterPro" id="IPR022631">
    <property type="entry name" value="ADOMET_SYNTHASE_CS"/>
</dbReference>
<dbReference type="InterPro" id="IPR022630">
    <property type="entry name" value="S-AdoMet_synt_C"/>
</dbReference>
<dbReference type="InterPro" id="IPR022629">
    <property type="entry name" value="S-AdoMet_synt_central"/>
</dbReference>
<dbReference type="InterPro" id="IPR022628">
    <property type="entry name" value="S-AdoMet_synt_N"/>
</dbReference>
<dbReference type="InterPro" id="IPR002133">
    <property type="entry name" value="S-AdoMet_synthetase"/>
</dbReference>
<dbReference type="InterPro" id="IPR022636">
    <property type="entry name" value="S-AdoMet_synthetase_sfam"/>
</dbReference>
<dbReference type="NCBIfam" id="TIGR01034">
    <property type="entry name" value="metK"/>
    <property type="match status" value="1"/>
</dbReference>
<dbReference type="PANTHER" id="PTHR11964">
    <property type="entry name" value="S-ADENOSYLMETHIONINE SYNTHETASE"/>
    <property type="match status" value="1"/>
</dbReference>
<dbReference type="Pfam" id="PF02773">
    <property type="entry name" value="S-AdoMet_synt_C"/>
    <property type="match status" value="1"/>
</dbReference>
<dbReference type="Pfam" id="PF02772">
    <property type="entry name" value="S-AdoMet_synt_M"/>
    <property type="match status" value="1"/>
</dbReference>
<dbReference type="Pfam" id="PF00438">
    <property type="entry name" value="S-AdoMet_synt_N"/>
    <property type="match status" value="1"/>
</dbReference>
<dbReference type="PIRSF" id="PIRSF000497">
    <property type="entry name" value="MAT"/>
    <property type="match status" value="1"/>
</dbReference>
<dbReference type="SUPFAM" id="SSF55973">
    <property type="entry name" value="S-adenosylmethionine synthetase"/>
    <property type="match status" value="3"/>
</dbReference>
<dbReference type="PROSITE" id="PS00376">
    <property type="entry name" value="ADOMET_SYNTHASE_1"/>
    <property type="match status" value="1"/>
</dbReference>
<dbReference type="PROSITE" id="PS00377">
    <property type="entry name" value="ADOMET_SYNTHASE_2"/>
    <property type="match status" value="1"/>
</dbReference>
<proteinExistence type="inferred from homology"/>